<feature type="initiator methionine" description="Removed" evidence="22">
    <location>
        <position position="1"/>
    </location>
</feature>
<feature type="chain" id="PRO_0000245243" description="p53-induced death domain-containing protein 1">
    <location>
        <begin position="2"/>
        <end position="910"/>
    </location>
</feature>
<feature type="chain" id="PRO_0000445715" description="PIDD-N" evidence="12">
    <location>
        <begin position="2"/>
        <end position="445"/>
    </location>
</feature>
<feature type="chain" id="PRO_0000445716" description="PIDD-C" evidence="12">
    <location>
        <begin position="446"/>
        <end position="910"/>
    </location>
</feature>
<feature type="chain" id="PRO_0000445717" description="PIDD-CC" evidence="12">
    <location>
        <begin position="589"/>
        <end position="910"/>
    </location>
</feature>
<feature type="repeat" description="LRR 1">
    <location>
        <begin position="126"/>
        <end position="147"/>
    </location>
</feature>
<feature type="repeat" description="LRR 2">
    <location>
        <begin position="149"/>
        <end position="171"/>
    </location>
</feature>
<feature type="repeat" description="LRR 3">
    <location>
        <begin position="172"/>
        <end position="194"/>
    </location>
</feature>
<feature type="repeat" description="LRR 4">
    <location>
        <begin position="195"/>
        <end position="216"/>
    </location>
</feature>
<feature type="repeat" description="LRR 5">
    <location>
        <begin position="218"/>
        <end position="240"/>
    </location>
</feature>
<feature type="repeat" description="LRR 6">
    <location>
        <begin position="241"/>
        <end position="263"/>
    </location>
</feature>
<feature type="repeat" description="LRR 7">
    <location>
        <begin position="264"/>
        <end position="285"/>
    </location>
</feature>
<feature type="domain" description="ZU5 1" evidence="3">
    <location>
        <begin position="322"/>
        <end position="454"/>
    </location>
</feature>
<feature type="domain" description="ZU5 2" evidence="3">
    <location>
        <begin position="455"/>
        <end position="596"/>
    </location>
</feature>
<feature type="domain" description="Death" evidence="2">
    <location>
        <begin position="788"/>
        <end position="873"/>
    </location>
</feature>
<feature type="region of interest" description="Disordered" evidence="4">
    <location>
        <begin position="1"/>
        <end position="25"/>
    </location>
</feature>
<feature type="region of interest" description="Peptidase S68" evidence="3">
    <location>
        <begin position="423"/>
        <end position="452"/>
    </location>
</feature>
<feature type="region of interest" description="Peptidase S68" evidence="3">
    <location>
        <begin position="566"/>
        <end position="594"/>
    </location>
</feature>
<feature type="region of interest" description="UPA domain" evidence="1">
    <location>
        <begin position="580"/>
        <end position="716"/>
    </location>
</feature>
<feature type="region of interest" description="Disordered" evidence="4">
    <location>
        <begin position="884"/>
        <end position="910"/>
    </location>
</feature>
<feature type="active site" evidence="3 12">
    <location>
        <position position="444"/>
    </location>
</feature>
<feature type="active site" evidence="3 12">
    <location>
        <position position="446"/>
    </location>
</feature>
<feature type="active site" evidence="3 12">
    <location>
        <position position="586"/>
    </location>
</feature>
<feature type="active site" evidence="3 12">
    <location>
        <position position="588"/>
    </location>
</feature>
<feature type="site" description="Cleavage; by autolysis" evidence="12">
    <location>
        <begin position="445"/>
        <end position="446"/>
    </location>
</feature>
<feature type="site" description="Cleavage; by autolysis" evidence="12">
    <location>
        <begin position="587"/>
        <end position="588"/>
    </location>
</feature>
<feature type="modified residue" description="N-acetylalanine" evidence="22">
    <location>
        <position position="2"/>
    </location>
</feature>
<feature type="modified residue" description="Phosphoserine" evidence="22">
    <location>
        <position position="299"/>
    </location>
</feature>
<feature type="modified residue" description="Phosphoserine" evidence="22">
    <location>
        <position position="305"/>
    </location>
</feature>
<feature type="splice variant" id="VSP_019664" description="In isoform 6." evidence="31">
    <location>
        <begin position="1"/>
        <end position="492"/>
    </location>
</feature>
<feature type="splice variant" id="VSP_019665" description="In isoform 4, isoform 5 and isoform 7." evidence="25 28 30 31">
    <location>
        <begin position="1"/>
        <end position="313"/>
    </location>
</feature>
<feature type="splice variant" id="VSP_019666" description="In isoform 3." evidence="23">
    <location>
        <begin position="1"/>
        <end position="146"/>
    </location>
</feature>
<feature type="splice variant" id="VSP_019667" description="In isoform 3." evidence="23">
    <location>
        <begin position="579"/>
        <end position="589"/>
    </location>
</feature>
<feature type="splice variant" id="VSP_019668" description="In isoform 7." evidence="25">
    <original>THFSWYWLWYTTKNCVGGLARKAWERLRLHRVNLIAL</original>
    <variation>LALVHHQELCGRPGSEGLGAAAAAPCEPHRSAAAPGP</variation>
    <location>
        <begin position="585"/>
        <end position="621"/>
    </location>
</feature>
<feature type="splice variant" id="VSP_019669" description="In isoform 5 and isoform 6." evidence="28 31">
    <original>W</original>
    <variation>WSVPPSFLSPPPPVCTALLTPSSPR</variation>
    <location>
        <position position="589"/>
    </location>
</feature>
<feature type="splice variant" id="VSP_019670" description="In isoform 7." evidence="25">
    <location>
        <begin position="622"/>
        <end position="910"/>
    </location>
</feature>
<feature type="splice variant" id="VSP_019671" description="In isoform 2 and isoform 6." evidence="26 31">
    <location>
        <begin position="704"/>
        <end position="720"/>
    </location>
</feature>
<feature type="splice variant" id="VSP_019672" description="In isoform 5 and isoform 6." evidence="28 31">
    <original>RLRGSEGPRRGAGLSLAPLNLGDAETGFLTQSNLLSVAGRLGLDWPAVALHLGVSYR</original>
    <variation>VGLRDSRGAGQDRGPGVTRVTWWSWGWSPGLNALFPSNRDFEGPRGHGGGLASPWHP</variation>
    <location>
        <begin position="759"/>
        <end position="815"/>
    </location>
</feature>
<feature type="splice variant" id="VSP_019673" description="In isoform 5 and isoform 6." evidence="28 31">
    <location>
        <begin position="816"/>
        <end position="910"/>
    </location>
</feature>
<feature type="sequence variant" id="VAR_028031" description="In dbSNP:rs10902221." evidence="5 6 7 9 14 20 21">
    <original>Q</original>
    <variation>R</variation>
    <location>
        <position position="331"/>
    </location>
</feature>
<feature type="sequence variant" id="VAR_087344" description="In MRT75." evidence="18">
    <location>
        <begin position="447"/>
        <end position="910"/>
    </location>
</feature>
<feature type="sequence variant" id="VAR_087345" description="In MRT75." evidence="17">
    <location>
        <begin position="637"/>
        <end position="910"/>
    </location>
</feature>
<feature type="sequence variant" id="VAR_087346" description="In MRT75; loss of interaction with CRADD; loss of activation of CASP2 protein; dbSNP:rs758859772." evidence="16 17">
    <original>R</original>
    <variation>W</variation>
    <location>
        <position position="815"/>
    </location>
</feature>
<feature type="sequence variant" id="VAR_087347" description="In MRT75; dbSNP:rs747620551." evidence="18">
    <original>R</original>
    <variation>W</variation>
    <location>
        <position position="862"/>
    </location>
</feature>
<feature type="sequence variant" id="VAR_080765" description="In MRT75; loss of interaction with CRADD; loss of activation of CASP2 protein." evidence="15 17">
    <location>
        <begin position="863"/>
        <end position="910"/>
    </location>
</feature>
<feature type="mutagenesis site" description="Loss of the proteolytic cleavage producing PIDD-C." evidence="12">
    <original>H</original>
    <variation>Q</variation>
    <location>
        <position position="444"/>
    </location>
</feature>
<feature type="mutagenesis site" description="Loss of the proteolytic cleavage producing PIDD-C." evidence="12">
    <original>F</original>
    <variation>H</variation>
    <variation>W</variation>
    <location>
        <position position="445"/>
    </location>
</feature>
<feature type="mutagenesis site" description="Loss of the proteolytic cleavage producing PIDD-C. Unable to translocate to the nucleus upon DNA damage. No effect on the ability to activate CASP2. Complete loss of proteolytic cleavage; when associated with A-588." evidence="12">
    <original>S</original>
    <variation>A</variation>
    <location>
        <position position="446"/>
    </location>
</feature>
<feature type="mutagenesis site" description="No effect on the proteolytic cleavage producing PIDD-C." evidence="12">
    <original>S</original>
    <variation>C</variation>
    <location>
        <position position="446"/>
    </location>
</feature>
<feature type="mutagenesis site" description="Loss of the proteolytic cleavage producing PIDD-CC." evidence="12">
    <original>F</original>
    <variation>A</variation>
    <location>
        <position position="582"/>
    </location>
</feature>
<feature type="mutagenesis site" description="Loss of the proteolytic cleavage producing PIDD-CC." evidence="12">
    <original>F</original>
    <variation>H</variation>
    <location>
        <position position="587"/>
    </location>
</feature>
<feature type="mutagenesis site" description="Loss of the proteolytic cleavage producing PIDD-CC. Loss of interaction with CRADD and of the ability to activate CASP2. No effect on translocation to the nucleus upon DNA damage. Complete loss of proteolytic cleavage; when associated with A-446." evidence="12">
    <original>S</original>
    <variation>A</variation>
    <location>
        <position position="588"/>
    </location>
</feature>
<feature type="mutagenesis site" description="No effect on the proteolytic cleavage producing PIDD-CC." evidence="12">
    <original>S</original>
    <variation>C</variation>
    <location>
        <position position="588"/>
    </location>
</feature>
<feature type="mutagenesis site" description="No effect on complex assembly with CRADD." evidence="13">
    <original>L</original>
    <variation>A</variation>
    <location>
        <position position="801"/>
    </location>
</feature>
<feature type="mutagenesis site" description="Loss of complex assembly with CRADD. Loss of PIDDosome assembly. Loss of CASP2 activation." evidence="13">
    <original>Y</original>
    <variation>A</variation>
    <location>
        <position position="814"/>
    </location>
</feature>
<feature type="mutagenesis site" description="Partial loss of complex assembly with CRADD." evidence="13">
    <original>R</original>
    <variation>A</variation>
    <location>
        <position position="815"/>
    </location>
</feature>
<feature type="mutagenesis site" description="Loss of complex assembly with CRADD." evidence="13">
    <original>R</original>
    <variation>E</variation>
    <location>
        <position position="815"/>
    </location>
</feature>
<feature type="mutagenesis site" description="Partial loss of complex assembly with CRADD." evidence="13">
    <original>R</original>
    <variation>A</variation>
    <location>
        <position position="825"/>
    </location>
</feature>
<feature type="mutagenesis site" description="Partial loss of complex assembly with CRADD. Decreased PIDDosome assembly. Decreased CASP2 activation." evidence="13">
    <original>R</original>
    <variation>E</variation>
    <location>
        <position position="825"/>
    </location>
</feature>
<feature type="mutagenesis site" description="Partial loss of complex assembly with CRADD." evidence="13">
    <original>D</original>
    <variation>K</variation>
    <location>
        <position position="826"/>
    </location>
</feature>
<feature type="mutagenesis site" description="Loss of complex assembly with CRADD." evidence="13">
    <original>L</original>
    <variation>E</variation>
    <location>
        <position position="828"/>
    </location>
</feature>
<feature type="mutagenesis site" description="No effect on complex assembly with CRADD." evidence="13">
    <original>E</original>
    <variation>K</variation>
    <location>
        <position position="830"/>
    </location>
</feature>
<feature type="mutagenesis site" description="Loss of complex assembly with CRADD. Loss of PIDDosome assembly. Loss of CASP2 activation." evidence="13">
    <original>F</original>
    <variation>D</variation>
    <location>
        <position position="837"/>
    </location>
</feature>
<feature type="mutagenesis site" description="Loss of complex assembly with CRADD. Loss of PIDDosome assembly. Loss of CASP2 activation." evidence="13">
    <original>R</original>
    <variation>A</variation>
    <location>
        <position position="862"/>
    </location>
</feature>
<feature type="mutagenesis site" description="Partial loss of complex assembly with CRADD." evidence="13">
    <original>Q</original>
    <variation>A</variation>
    <location>
        <position position="863"/>
    </location>
</feature>
<feature type="sequence conflict" description="In Ref. 4; BAC11272." evidence="32" ref="4">
    <original>V</original>
    <variation>A</variation>
    <location>
        <position position="335"/>
    </location>
</feature>
<feature type="sequence conflict" description="In Ref. 3; AAP97716." evidence="32" ref="3">
    <original>W</original>
    <variation>L</variation>
    <location>
        <position position="421"/>
    </location>
</feature>
<feature type="sequence conflict" description="In Ref. 4; BAC11272." evidence="32" ref="4">
    <original>S</original>
    <variation>F</variation>
    <location>
        <position position="492"/>
    </location>
</feature>
<feature type="sequence conflict" description="In Ref. 6; CAD38708." evidence="32" ref="6">
    <original>A</original>
    <variation>V</variation>
    <location>
        <position position="512"/>
    </location>
</feature>
<feature type="sequence conflict" description="In Ref. 6; CAD38708." evidence="32" ref="6">
    <original>G</original>
    <variation>E</variation>
    <location>
        <position position="601"/>
    </location>
</feature>
<feature type="sequence conflict" description="In Ref. 1; AAF69491." evidence="32" ref="1">
    <original>A</original>
    <variation>V</variation>
    <location>
        <position position="895"/>
    </location>
</feature>
<feature type="turn" evidence="35">
    <location>
        <begin position="782"/>
        <end position="784"/>
    </location>
</feature>
<feature type="helix" evidence="35">
    <location>
        <begin position="789"/>
        <end position="797"/>
    </location>
</feature>
<feature type="helix" evidence="35">
    <location>
        <begin position="803"/>
        <end position="809"/>
    </location>
</feature>
<feature type="helix" evidence="35">
    <location>
        <begin position="814"/>
        <end position="823"/>
    </location>
</feature>
<feature type="turn" evidence="35">
    <location>
        <begin position="824"/>
        <end position="826"/>
    </location>
</feature>
<feature type="helix" evidence="35">
    <location>
        <begin position="828"/>
        <end position="841"/>
    </location>
</feature>
<feature type="helix" evidence="35">
    <location>
        <begin position="849"/>
        <end position="859"/>
    </location>
</feature>
<feature type="helix" evidence="35">
    <location>
        <begin position="863"/>
        <end position="872"/>
    </location>
</feature>
<evidence type="ECO:0000250" key="1"/>
<evidence type="ECO:0000255" key="2">
    <source>
        <dbReference type="PROSITE-ProRule" id="PRU00064"/>
    </source>
</evidence>
<evidence type="ECO:0000255" key="3">
    <source>
        <dbReference type="PROSITE-ProRule" id="PRU00485"/>
    </source>
</evidence>
<evidence type="ECO:0000256" key="4">
    <source>
        <dbReference type="SAM" id="MobiDB-lite"/>
    </source>
</evidence>
<evidence type="ECO:0000269" key="5">
    <source>
    </source>
</evidence>
<evidence type="ECO:0000269" key="6">
    <source>
    </source>
</evidence>
<evidence type="ECO:0000269" key="7">
    <source>
    </source>
</evidence>
<evidence type="ECO:0000269" key="8">
    <source>
    </source>
</evidence>
<evidence type="ECO:0000269" key="9">
    <source>
    </source>
</evidence>
<evidence type="ECO:0000269" key="10">
    <source>
    </source>
</evidence>
<evidence type="ECO:0000269" key="11">
    <source>
    </source>
</evidence>
<evidence type="ECO:0000269" key="12">
    <source>
    </source>
</evidence>
<evidence type="ECO:0000269" key="13">
    <source>
    </source>
</evidence>
<evidence type="ECO:0000269" key="14">
    <source>
    </source>
</evidence>
<evidence type="ECO:0000269" key="15">
    <source>
    </source>
</evidence>
<evidence type="ECO:0000269" key="16">
    <source>
    </source>
</evidence>
<evidence type="ECO:0000269" key="17">
    <source>
    </source>
</evidence>
<evidence type="ECO:0000269" key="18">
    <source>
    </source>
</evidence>
<evidence type="ECO:0000269" key="19">
    <source>
    </source>
</evidence>
<evidence type="ECO:0000269" key="20">
    <source ref="3"/>
</evidence>
<evidence type="ECO:0000269" key="21">
    <source ref="5"/>
</evidence>
<evidence type="ECO:0000269" key="22">
    <source ref="8"/>
</evidence>
<evidence type="ECO:0000303" key="23">
    <source>
    </source>
</evidence>
<evidence type="ECO:0000303" key="24">
    <source>
    </source>
</evidence>
<evidence type="ECO:0000303" key="25">
    <source>
    </source>
</evidence>
<evidence type="ECO:0000303" key="26">
    <source>
    </source>
</evidence>
<evidence type="ECO:0000303" key="27">
    <source>
    </source>
</evidence>
<evidence type="ECO:0000303" key="28">
    <source>
    </source>
</evidence>
<evidence type="ECO:0000303" key="29">
    <source>
    </source>
</evidence>
<evidence type="ECO:0000303" key="30">
    <source ref="3"/>
</evidence>
<evidence type="ECO:0000303" key="31">
    <source ref="5"/>
</evidence>
<evidence type="ECO:0000305" key="32"/>
<evidence type="ECO:0000312" key="33">
    <source>
        <dbReference type="HGNC" id="HGNC:16491"/>
    </source>
</evidence>
<evidence type="ECO:0007744" key="34">
    <source>
        <dbReference type="PDB" id="2OF5"/>
    </source>
</evidence>
<evidence type="ECO:0007829" key="35">
    <source>
        <dbReference type="PDB" id="2OF5"/>
    </source>
</evidence>
<sequence length="910" mass="99712">MAATVEGPELEAAAAAGDASEDSDAGSRALPFLGGNRLSLDLYPGGCQQLLHLCVQQPLQLLQVEFLRLSTHEDPQLLEATLAQLPQSLSCLRSLVLKGGQRRDTLGACLRGALTNLPAGLSGLAHLAHLDLSFNSLETLPACVLQMRGLGALLLSHNCLSELPEALGALPALTFLTVTHNRLQTLPPALGALSTLQRLDLSQNLLDTLPPEIGGLGSLLELNLASNRLQSLPASLAGLRSLRLLVLHSNLLASVPADLARLPLLTRLDLRDNQLRDLPPELLDAPFVRLQGNPLGEASPDAPSSPVAALIPEMPRLFLTSDLDSFPVTPQGCSVTLACGVRLQFPAGATATPITIRYRLLLPEPGLVPLGPHDALLSHVLELQPHGVAFQQDVGLWLLFTPPQARRCREVVVRTRNDNSWGDLETYLEEEAPQRLWAHCQVPHFSWFLVVSRPVSNACLVPPEGTLLCSSGHPGVKVIFPPGATEEPRRVSMQVVRMAGRELQALLGEPEAAVSPLLCLSQSGPPSFLQPVTVQLPLPSGITGLSLDRSRLHLLYWAPPAATWDDITAQVVLELTHLYARFQVTHFSWYWLWYTTKNCVGGLARKAWERLRLHRVNLIALQRRRDPEQVLLQCLPRNKVDATLRRLLERYRGPEPSDTVEMFEGEEFFAAFERGIDVDADRPDCVEGRICFVFYSHLKNVKEVYVTTTLDREAQAVRGQVSFYRGAVPVRVPEEAEAARQRKGADALWMATLPIKLPRLRGSEGPRRGAGLSLAPLNLGDAETGFLTQSNLLSVAGRLGLDWPAVALHLGVSYREVQRIRHEFRDDLDEQIRHMLFSWAERQAGQPGAVGLLVQALEQSDRQDVAEEVRAVLELGRRKYQDSIRRMGLAPKDPALPGSSAPQPPEPAQA</sequence>
<comment type="function">
    <text evidence="6 8 10 12">Component of the DNA damage/stress response pathway that functions downstream of p53/TP53 and can either promote cell survival or apoptosis (PubMed:10973264, PubMed:15073321, PubMed:16360037, PubMed:17159900). Associated with CRADD and the CASP2 caspase, it forms the PIDDosome a complex that activates CASP2 and triggers apoptosis (PubMed:15073321, PubMed:17159900). Associated with IKBKG and RIPK1, it enhances sumoylation and ubiquitination of IKBKG which is important for activation of the transcription factor NF-kappa-B (PubMed:16360037, PubMed:17159900).</text>
</comment>
<comment type="subunit">
    <text evidence="5 8 10 11 12 13 17">Forms a complex named the PIDDosome with CASP2 and CRADD (PubMed:15073321, PubMed:16652156, PubMed:17159900, PubMed:17289572, PubMed:33414379). Forms a complex with IKBKG and RIPK1 (PubMed:16360037). Interacts with FADD and MADD (PubMed:10825539).</text>
</comment>
<comment type="interaction">
    <interactant intactId="EBI-520427">
        <id>Q9HB75</id>
    </interactant>
    <interactant intactId="EBI-520375">
        <id>P78560</id>
        <label>CRADD</label>
    </interactant>
    <organismsDiffer>false</organismsDiffer>
    <experiments>7</experiments>
</comment>
<comment type="interaction">
    <interactant intactId="EBI-520427">
        <id>Q9HB75</id>
    </interactant>
    <interactant intactId="EBI-724076">
        <id>Q99750</id>
        <label>MDFI</label>
    </interactant>
    <organismsDiffer>false</organismsDiffer>
    <experiments>3</experiments>
</comment>
<comment type="interaction">
    <interactant intactId="EBI-12326369">
        <id>Q9HB75-2</id>
    </interactant>
    <interactant intactId="EBI-742664">
        <id>Q9BPX1</id>
        <label>HSD17B14</label>
    </interactant>
    <organismsDiffer>false</organismsDiffer>
    <experiments>3</experiments>
</comment>
<comment type="interaction">
    <interactant intactId="EBI-12326369">
        <id>Q9HB75-2</id>
    </interactant>
    <interactant intactId="EBI-9089060">
        <id>Q7Z7F0-4</id>
        <label>KHDC4</label>
    </interactant>
    <organismsDiffer>false</organismsDiffer>
    <experiments>3</experiments>
</comment>
<comment type="interaction">
    <interactant intactId="EBI-12326369">
        <id>Q9HB75-2</id>
    </interactant>
    <interactant intactId="EBI-1389308">
        <id>Q7Z3K3</id>
        <label>POGZ</label>
    </interactant>
    <organismsDiffer>false</organismsDiffer>
    <experiments>3</experiments>
</comment>
<comment type="subcellular location">
    <subcellularLocation>
        <location evidence="10 12 19">Cytoplasm</location>
    </subcellularLocation>
    <subcellularLocation>
        <location evidence="10 12">Nucleus</location>
    </subcellularLocation>
    <text evidence="12">Enriched in the nucleus upon DNA damage.</text>
</comment>
<comment type="alternative products">
    <event type="alternative splicing"/>
    <isoform>
        <id>Q9HB75-1</id>
        <name>1</name>
        <sequence type="displayed"/>
    </isoform>
    <isoform>
        <id>Q9HB75-2</id>
        <name>2</name>
        <sequence type="described" ref="VSP_019671"/>
    </isoform>
    <isoform>
        <id>Q9HB75-3</id>
        <name>3</name>
        <sequence type="described" ref="VSP_019666 VSP_019667"/>
    </isoform>
    <isoform>
        <id>Q9HB75-4</id>
        <name>4</name>
        <sequence type="described" ref="VSP_019665"/>
    </isoform>
    <isoform>
        <id>Q9HB75-5</id>
        <name>5</name>
        <sequence type="described" ref="VSP_019665 VSP_019669 VSP_019672 VSP_019673"/>
    </isoform>
    <isoform>
        <id>Q9HB75-6</id>
        <name>6</name>
        <sequence type="described" ref="VSP_019664 VSP_019669 VSP_019671 VSP_019672 VSP_019673"/>
    </isoform>
    <isoform>
        <id>Q9HB75-7</id>
        <name>7</name>
        <sequence type="described" ref="VSP_019665 VSP_019668 VSP_019670"/>
    </isoform>
</comment>
<comment type="tissue specificity">
    <text evidence="5">Ubiquitous.</text>
</comment>
<comment type="induction">
    <text evidence="6 12">Up-regulated in response to DNA damage.</text>
</comment>
<comment type="domain">
    <text evidence="13">The Death domain mediates the interaction with CRADD and the formation of a complex composed of 5 PIDD1 and 7 CRADD proteins which in turn recruit 7 CASP2 to form the PIDDosome.</text>
</comment>
<comment type="domain">
    <text evidence="12">The LRR repeat-containing domain has a regulatory activity, being autoinhibitory for the activation of NF-kappa-B.</text>
</comment>
<comment type="PTM">
    <text evidence="12">Undergoes autoproteolytic processing whose extent either directs cells towards survival or apoptotic pathways (PubMed:17159900). Autoproteolytically cleaved into two main fragments PIDD-N and PIDD-C (PubMed:17159900). PIDD-C can be further processed into PIDD-CC, a processing which is enhanced by DNA damage (PubMed:17159900). The cleavage producing PIDD-C is required for translocation of PIDD1 to the nucleus upon DNA damage and activation of NF-kappa-B (PubMed:17159900). PIDD-CC mediates the interaction with CRADD and the cleavage producing PIDD-CC is required for the activation of CASP2 (PubMed:17159900). PIDD-N remains associated with PIDD-C and PIDD-CC after cleavage (PubMed:17159900).</text>
</comment>
<comment type="disease" evidence="15 16 17 18">
    <disease id="DI-06393">
        <name>Intellectual developmental disorder, autosomal recessive 75, with neuropsychiatric features and variant lissencephaly</name>
        <acronym>MRT75</acronym>
        <description>An autosomal recessive disorder characterized by global developmental delay apparent from infancy or early childhood, impaired intellectual development, and behavioral and psychiatric abnormalities. Some patients present seizures and facial dysmorphism. Brain imaging often shows cortical anomalies.</description>
        <dbReference type="MIM" id="619827"/>
    </disease>
    <text>The disease is caused by variants affecting the gene represented in this entry.</text>
</comment>
<comment type="sequence caution" evidence="32">
    <conflict type="erroneous initiation">
        <sequence resource="EMBL-CDS" id="BAD92069"/>
    </conflict>
    <text>Extended N-terminus.</text>
</comment>
<comment type="sequence caution" evidence="32">
    <conflict type="erroneous initiation">
        <sequence resource="EMBL-CDS" id="BAD92186"/>
    </conflict>
    <text>Extended N-terminus.</text>
</comment>
<comment type="sequence caution" evidence="32">
    <conflict type="erroneous initiation">
        <sequence resource="EMBL-CDS" id="BAD92766"/>
    </conflict>
    <text>Extended N-terminus.</text>
</comment>
<comment type="sequence caution" evidence="32">
    <conflict type="erroneous initiation">
        <sequence resource="EMBL-CDS" id="CAD38708"/>
    </conflict>
    <text>Extended N-terminus.</text>
</comment>
<keyword id="KW-0002">3D-structure</keyword>
<keyword id="KW-0007">Acetylation</keyword>
<keyword id="KW-0025">Alternative splicing</keyword>
<keyword id="KW-0053">Apoptosis</keyword>
<keyword id="KW-0963">Cytoplasm</keyword>
<keyword id="KW-0903">Direct protein sequencing</keyword>
<keyword id="KW-0225">Disease variant</keyword>
<keyword id="KW-0378">Hydrolase</keyword>
<keyword id="KW-0991">Intellectual disability</keyword>
<keyword id="KW-0433">Leucine-rich repeat</keyword>
<keyword id="KW-0539">Nucleus</keyword>
<keyword id="KW-0597">Phosphoprotein</keyword>
<keyword id="KW-1267">Proteomics identification</keyword>
<keyword id="KW-1185">Reference proteome</keyword>
<keyword id="KW-0677">Repeat</keyword>
<accession>Q9HB75</accession>
<accession>Q59FD1</accession>
<accession>Q59H10</accession>
<accession>Q59HC7</accession>
<accession>Q7Z4P8</accession>
<accession>Q8NC89</accession>
<accession>Q8NDL2</accession>
<accession>Q96C25</accession>
<accession>Q9NRE6</accession>
<organism>
    <name type="scientific">Homo sapiens</name>
    <name type="common">Human</name>
    <dbReference type="NCBI Taxonomy" id="9606"/>
    <lineage>
        <taxon>Eukaryota</taxon>
        <taxon>Metazoa</taxon>
        <taxon>Chordata</taxon>
        <taxon>Craniata</taxon>
        <taxon>Vertebrata</taxon>
        <taxon>Euteleostomi</taxon>
        <taxon>Mammalia</taxon>
        <taxon>Eutheria</taxon>
        <taxon>Euarchontoglires</taxon>
        <taxon>Primates</taxon>
        <taxon>Haplorrhini</taxon>
        <taxon>Catarrhini</taxon>
        <taxon>Hominidae</taxon>
        <taxon>Homo</taxon>
    </lineage>
</organism>
<proteinExistence type="evidence at protein level"/>
<reference key="1">
    <citation type="journal article" date="2000" name="Biochim. Biophys. Acta">
        <title>LRDD, a novel leucine rich repeat and death domain containing protein.</title>
        <authorList>
            <person name="Telliez J.-B."/>
            <person name="Bean K.M."/>
            <person name="Lin L.-L."/>
        </authorList>
    </citation>
    <scope>NUCLEOTIDE SEQUENCE [MRNA] (ISOFORM 3)</scope>
    <scope>TISSUE SPECIFICITY</scope>
    <scope>INTERACTION WITH FADD AND MADD</scope>
    <scope>VARIANT ARG-331</scope>
</reference>
<reference key="2">
    <citation type="journal article" date="2000" name="Nat. Genet.">
        <title>Pidd, a new death-domain-containing protein, is induced by p53 and promotes apoptosis.</title>
        <authorList>
            <person name="Lin Y."/>
            <person name="Ma W."/>
            <person name="Benchimol S."/>
        </authorList>
    </citation>
    <scope>NUCLEOTIDE SEQUENCE [MRNA] (ISOFORM 1)</scope>
    <scope>FUNCTION</scope>
    <scope>INDUCTION</scope>
    <scope>VARIANT ARG-331</scope>
</reference>
<reference key="3">
    <citation type="submission" date="2002-01" db="EMBL/GenBank/DDBJ databases">
        <authorList>
            <person name="Zan Q."/>
            <person name="Guo J.H."/>
            <person name="Yu L."/>
        </authorList>
    </citation>
    <scope>NUCLEOTIDE SEQUENCE [LARGE SCALE MRNA] (ISOFORM 4)</scope>
    <scope>VARIANT ARG-331</scope>
    <source>
        <tissue>Brain</tissue>
    </source>
</reference>
<reference key="4">
    <citation type="journal article" date="2004" name="Nat. Genet.">
        <title>Complete sequencing and characterization of 21,243 full-length human cDNAs.</title>
        <authorList>
            <person name="Ota T."/>
            <person name="Suzuki Y."/>
            <person name="Nishikawa T."/>
            <person name="Otsuki T."/>
            <person name="Sugiyama T."/>
            <person name="Irie R."/>
            <person name="Wakamatsu A."/>
            <person name="Hayashi K."/>
            <person name="Sato H."/>
            <person name="Nagai K."/>
            <person name="Kimura K."/>
            <person name="Makita H."/>
            <person name="Sekine M."/>
            <person name="Obayashi M."/>
            <person name="Nishi T."/>
            <person name="Shibahara T."/>
            <person name="Tanaka T."/>
            <person name="Ishii S."/>
            <person name="Yamamoto J."/>
            <person name="Saito K."/>
            <person name="Kawai Y."/>
            <person name="Isono Y."/>
            <person name="Nakamura Y."/>
            <person name="Nagahari K."/>
            <person name="Murakami K."/>
            <person name="Yasuda T."/>
            <person name="Iwayanagi T."/>
            <person name="Wagatsuma M."/>
            <person name="Shiratori A."/>
            <person name="Sudo H."/>
            <person name="Hosoiri T."/>
            <person name="Kaku Y."/>
            <person name="Kodaira H."/>
            <person name="Kondo H."/>
            <person name="Sugawara M."/>
            <person name="Takahashi M."/>
            <person name="Kanda K."/>
            <person name="Yokoi T."/>
            <person name="Furuya T."/>
            <person name="Kikkawa E."/>
            <person name="Omura Y."/>
            <person name="Abe K."/>
            <person name="Kamihara K."/>
            <person name="Katsuta N."/>
            <person name="Sato K."/>
            <person name="Tanikawa M."/>
            <person name="Yamazaki M."/>
            <person name="Ninomiya K."/>
            <person name="Ishibashi T."/>
            <person name="Yamashita H."/>
            <person name="Murakawa K."/>
            <person name="Fujimori K."/>
            <person name="Tanai H."/>
            <person name="Kimata M."/>
            <person name="Watanabe M."/>
            <person name="Hiraoka S."/>
            <person name="Chiba Y."/>
            <person name="Ishida S."/>
            <person name="Ono Y."/>
            <person name="Takiguchi S."/>
            <person name="Watanabe S."/>
            <person name="Yosida M."/>
            <person name="Hotuta T."/>
            <person name="Kusano J."/>
            <person name="Kanehori K."/>
            <person name="Takahashi-Fujii A."/>
            <person name="Hara H."/>
            <person name="Tanase T.-O."/>
            <person name="Nomura Y."/>
            <person name="Togiya S."/>
            <person name="Komai F."/>
            <person name="Hara R."/>
            <person name="Takeuchi K."/>
            <person name="Arita M."/>
            <person name="Imose N."/>
            <person name="Musashino K."/>
            <person name="Yuuki H."/>
            <person name="Oshima A."/>
            <person name="Sasaki N."/>
            <person name="Aotsuka S."/>
            <person name="Yoshikawa Y."/>
            <person name="Matsunawa H."/>
            <person name="Ichihara T."/>
            <person name="Shiohata N."/>
            <person name="Sano S."/>
            <person name="Moriya S."/>
            <person name="Momiyama H."/>
            <person name="Satoh N."/>
            <person name="Takami S."/>
            <person name="Terashima Y."/>
            <person name="Suzuki O."/>
            <person name="Nakagawa S."/>
            <person name="Senoh A."/>
            <person name="Mizoguchi H."/>
            <person name="Goto Y."/>
            <person name="Shimizu F."/>
            <person name="Wakebe H."/>
            <person name="Hishigaki H."/>
            <person name="Watanabe T."/>
            <person name="Sugiyama A."/>
            <person name="Takemoto M."/>
            <person name="Kawakami B."/>
            <person name="Yamazaki M."/>
            <person name="Watanabe K."/>
            <person name="Kumagai A."/>
            <person name="Itakura S."/>
            <person name="Fukuzumi Y."/>
            <person name="Fujimori Y."/>
            <person name="Komiyama M."/>
            <person name="Tashiro H."/>
            <person name="Tanigami A."/>
            <person name="Fujiwara T."/>
            <person name="Ono T."/>
            <person name="Yamada K."/>
            <person name="Fujii Y."/>
            <person name="Ozaki K."/>
            <person name="Hirao M."/>
            <person name="Ohmori Y."/>
            <person name="Kawabata A."/>
            <person name="Hikiji T."/>
            <person name="Kobatake N."/>
            <person name="Inagaki H."/>
            <person name="Ikema Y."/>
            <person name="Okamoto S."/>
            <person name="Okitani R."/>
            <person name="Kawakami T."/>
            <person name="Noguchi S."/>
            <person name="Itoh T."/>
            <person name="Shigeta K."/>
            <person name="Senba T."/>
            <person name="Matsumura K."/>
            <person name="Nakajima Y."/>
            <person name="Mizuno T."/>
            <person name="Morinaga M."/>
            <person name="Sasaki M."/>
            <person name="Togashi T."/>
            <person name="Oyama M."/>
            <person name="Hata H."/>
            <person name="Watanabe M."/>
            <person name="Komatsu T."/>
            <person name="Mizushima-Sugano J."/>
            <person name="Satoh T."/>
            <person name="Shirai Y."/>
            <person name="Takahashi Y."/>
            <person name="Nakagawa K."/>
            <person name="Okumura K."/>
            <person name="Nagase T."/>
            <person name="Nomura N."/>
            <person name="Kikuchi H."/>
            <person name="Masuho Y."/>
            <person name="Yamashita R."/>
            <person name="Nakai K."/>
            <person name="Yada T."/>
            <person name="Nakamura Y."/>
            <person name="Ohara O."/>
            <person name="Isogai T."/>
            <person name="Sugano S."/>
        </authorList>
    </citation>
    <scope>NUCLEOTIDE SEQUENCE [LARGE SCALE MRNA] (ISOFORM 7)</scope>
    <scope>VARIANT ARG-331</scope>
</reference>
<reference key="5">
    <citation type="submission" date="2005-03" db="EMBL/GenBank/DDBJ databases">
        <authorList>
            <person name="Totoki Y."/>
            <person name="Toyoda A."/>
            <person name="Takeda T."/>
            <person name="Sakaki Y."/>
            <person name="Tanaka A."/>
            <person name="Yokoyama S."/>
            <person name="Ohara O."/>
            <person name="Nagase T."/>
            <person name="Kikuno R.F."/>
        </authorList>
    </citation>
    <scope>NUCLEOTIDE SEQUENCE [LARGE SCALE MRNA] (ISOFORMS 4; 5 AND 6)</scope>
    <scope>VARIANT ARG-331</scope>
    <source>
        <tissue>Brain</tissue>
        <tissue>Spleen</tissue>
    </source>
</reference>
<reference key="6">
    <citation type="journal article" date="2007" name="BMC Genomics">
        <title>The full-ORF clone resource of the German cDNA consortium.</title>
        <authorList>
            <person name="Bechtel S."/>
            <person name="Rosenfelder H."/>
            <person name="Duda A."/>
            <person name="Schmidt C.P."/>
            <person name="Ernst U."/>
            <person name="Wellenreuther R."/>
            <person name="Mehrle A."/>
            <person name="Schuster C."/>
            <person name="Bahr A."/>
            <person name="Bloecker H."/>
            <person name="Heubner D."/>
            <person name="Hoerlein A."/>
            <person name="Michel G."/>
            <person name="Wedler H."/>
            <person name="Koehrer K."/>
            <person name="Ottenwaelder B."/>
            <person name="Poustka A."/>
            <person name="Wiemann S."/>
            <person name="Schupp I."/>
        </authorList>
    </citation>
    <scope>NUCLEOTIDE SEQUENCE [LARGE SCALE MRNA] (ISOFORM 5)</scope>
    <scope>VARIANT ARG-331</scope>
    <source>
        <tissue>Testis</tissue>
    </source>
</reference>
<reference key="7">
    <citation type="journal article" date="2004" name="Genome Res.">
        <title>The status, quality, and expansion of the NIH full-length cDNA project: the Mammalian Gene Collection (MGC).</title>
        <authorList>
            <consortium name="The MGC Project Team"/>
        </authorList>
    </citation>
    <scope>NUCLEOTIDE SEQUENCE [LARGE SCALE MRNA] (ISOFORM 2)</scope>
    <scope>VARIANT ARG-331</scope>
    <source>
        <tissue>Uterus</tissue>
    </source>
</reference>
<reference key="8">
    <citation type="submission" date="2009-03" db="UniProtKB">
        <authorList>
            <person name="Bienvenut W.V."/>
            <person name="Waridel P."/>
            <person name="Quadroni M."/>
        </authorList>
    </citation>
    <scope>PROTEIN SEQUENCE OF 2-37; 69-93; 103-111; 183-316; 343-357; 415-435; 454-497; 552-581; 598-605; 613-623; 626-637; 651-740; 743-759; 768-798 AND 826-870</scope>
    <scope>CLEAVAGE OF INITIATOR METHIONINE</scope>
    <scope>ACETYLATION AT ALA-2</scope>
    <scope>PHOSPHORYLATION AT SER-299 AND SER-305</scope>
    <scope>IDENTIFICATION BY MASS SPECTROMETRY</scope>
    <source>
        <tissue>Embryonic kidney</tissue>
    </source>
</reference>
<reference key="9">
    <citation type="journal article" date="2004" name="Science">
        <title>The PIDDosome, a protein complex implicated in activation of caspase-2 in response to genotoxic stress.</title>
        <authorList>
            <person name="Tinel A."/>
            <person name="Tschopp J."/>
        </authorList>
    </citation>
    <scope>FUNCTION</scope>
    <scope>IDENTIFICATION IN PIDDOSOME COMPLEX</scope>
</reference>
<reference key="10">
    <citation type="journal article" date="2005" name="Cell">
        <title>PIDD mediates NF-kappaB activation in response to DNA damage.</title>
        <authorList>
            <person name="Janssens S."/>
            <person name="Tinel A."/>
            <person name="Lippens S."/>
            <person name="Tschopp J."/>
        </authorList>
    </citation>
    <scope>FUNCTION</scope>
    <scope>INTERACTION WITH IKBKG AND RIPK1</scope>
    <scope>SUBCELLULAR LOCATION</scope>
</reference>
<reference key="11">
    <citation type="journal article" date="2006" name="Oncogene">
        <title>Functional connection between p53 and caspase-2 is essential for apoptosis induced by DNA damage.</title>
        <authorList>
            <person name="Vakifahmetoglu H."/>
            <person name="Olsson M."/>
            <person name="Orrenius S."/>
            <person name="Zhivotovsky B."/>
        </authorList>
    </citation>
    <scope>IDENTIFICATION IN PIDDOSOME COMPLEX</scope>
</reference>
<reference key="12">
    <citation type="journal article" date="2007" name="EMBO J.">
        <title>Autoproteolysis of PIDD marks the bifurcation between pro-death caspase-2 and pro-survival NF-kappaB pathway.</title>
        <authorList>
            <person name="Tinel A."/>
            <person name="Janssens S."/>
            <person name="Lippens S."/>
            <person name="Cuenin S."/>
            <person name="Logette E."/>
            <person name="Jaccard B."/>
            <person name="Quadroni M."/>
            <person name="Tschopp J."/>
        </authorList>
    </citation>
    <scope>FUNCTION</scope>
    <scope>CATALYTIC ACTIVITY</scope>
    <scope>INTERACTION WITH CRADD</scope>
    <scope>SUBCELLULAR LOCATION</scope>
    <scope>INDUCTION</scope>
    <scope>DOMAIN</scope>
    <scope>AUTOPROTEOLYTIC PROCESSING</scope>
    <scope>ACTIVE SITE</scope>
    <scope>CLEAVAGE SITE</scope>
    <scope>MUTAGENESIS OF HIS-444; PHE-445; SER-446; PHE-582; PHE-587 AND SER-588</scope>
</reference>
<reference key="13">
    <citation type="journal article" date="2025" name="Life. Sci Alliance">
        <title>Noncanonical altPIDD1 protein: unveiling the true major translational output of the PIDD1 gene.</title>
        <authorList>
            <person name="Comtois F."/>
            <person name="Jacques J.F."/>
            <person name="Metayer L."/>
            <person name="Ouedraogo W.Y.D."/>
            <person name="Ouangraoua A."/>
            <person name="Denault J.B."/>
            <person name="Roucou X."/>
        </authorList>
    </citation>
    <scope>SUBCELLULAR LOCATION</scope>
</reference>
<reference evidence="34" key="14">
    <citation type="journal article" date="2007" name="Cell">
        <title>Death domain assembly mechanism revealed by crystal structure of the oligomeric PIDDosome core complex.</title>
        <authorList>
            <person name="Park H.H."/>
            <person name="Logette E."/>
            <person name="Raunser S."/>
            <person name="Cuenin S."/>
            <person name="Walz T."/>
            <person name="Tschopp J."/>
            <person name="Wu H."/>
        </authorList>
    </citation>
    <scope>X-RAY CRYSTALLOGRAPHY (3.20 ANGSTROMS) OF 778-883 IN COMPLEX WITH CRADD</scope>
    <scope>DOMAIN</scope>
    <scope>MUTAGENESIS OF LEU-801; TYR-814; ARG-815; ARG-825; ASP-826; LEU-828; GLU-830; PHE-837; ARG-862 AND GLN-863</scope>
</reference>
<reference key="15">
    <citation type="journal article" date="2018" name="Mol. Psychiatry">
        <title>Mapping autosomal recessive intellectual disability: combined microarray and exome sequencing identifies 26 novel candidate genes in 192 consanguineous families.</title>
        <authorList>
            <person name="Harripaul R."/>
            <person name="Vasli N."/>
            <person name="Mikhailov A."/>
            <person name="Rafiq M.A."/>
            <person name="Mittal K."/>
            <person name="Windpassinger C."/>
            <person name="Sheikh T.I."/>
            <person name="Noor A."/>
            <person name="Mahmood H."/>
            <person name="Downey S."/>
            <person name="Johnson M."/>
            <person name="Vleuten K."/>
            <person name="Bell L."/>
            <person name="Ilyas M."/>
            <person name="Khan F.S."/>
            <person name="Khan V."/>
            <person name="Moradi M."/>
            <person name="Ayaz M."/>
            <person name="Naeem F."/>
            <person name="Heidari A."/>
            <person name="Ahmed I."/>
            <person name="Ghadami S."/>
            <person name="Agha Z."/>
            <person name="Zeinali S."/>
            <person name="Qamar R."/>
            <person name="Mozhdehipanah H."/>
            <person name="John P."/>
            <person name="Mir A."/>
            <person name="Ansar M."/>
            <person name="French L."/>
            <person name="Ayub M."/>
            <person name="Vincent J.B."/>
        </authorList>
    </citation>
    <scope>INVOLVEMENT IN MRT75</scope>
    <scope>VARIANT MRT75 863-GLN--ALA-910 DEL</scope>
</reference>
<reference key="16">
    <citation type="journal article" date="2019" name="Mol. Psychiatry">
        <title>Genetics of intellectual disability in consanguineous families.</title>
        <authorList>
            <person name="Hu H."/>
            <person name="Kahrizi K."/>
            <person name="Musante L."/>
            <person name="Fattahi Z."/>
            <person name="Herwig R."/>
            <person name="Hosseini M."/>
            <person name="Oppitz C."/>
            <person name="Abedini S.S."/>
            <person name="Suckow V."/>
            <person name="Larti F."/>
            <person name="Beheshtian M."/>
            <person name="Lipkowitz B."/>
            <person name="Akhtarkhavari T."/>
            <person name="Mehvari S."/>
            <person name="Otto S."/>
            <person name="Mohseni M."/>
            <person name="Arzhangi S."/>
            <person name="Jamali P."/>
            <person name="Mojahedi F."/>
            <person name="Taghdiri M."/>
            <person name="Papari E."/>
            <person name="Soltani Banavandi M.J."/>
            <person name="Akbari S."/>
            <person name="Tonekaboni S.H."/>
            <person name="Dehghani H."/>
            <person name="Ebrahimpour M.R."/>
            <person name="Bader I."/>
            <person name="Davarnia B."/>
            <person name="Cohen M."/>
            <person name="Khodaei H."/>
            <person name="Albrecht B."/>
            <person name="Azimi S."/>
            <person name="Zirn B."/>
            <person name="Bastami M."/>
            <person name="Wieczorek D."/>
            <person name="Bahrami G."/>
            <person name="Keleman K."/>
            <person name="Vahid L.N."/>
            <person name="Tzschach A."/>
            <person name="Gaertner J."/>
            <person name="Gillessen-Kaesbach G."/>
            <person name="Varaghchi J.R."/>
            <person name="Timmermann B."/>
            <person name="Pourfatemi F."/>
            <person name="Jankhah A."/>
            <person name="Chen W."/>
            <person name="Nikuei P."/>
            <person name="Kalscheuer V.M."/>
            <person name="Oladnabi M."/>
            <person name="Wienker T.F."/>
            <person name="Ropers H.H."/>
            <person name="Najmabadi H."/>
        </authorList>
    </citation>
    <scope>VARIANT MRT75 TRP-815</scope>
</reference>
<reference key="17">
    <citation type="journal article" date="2021" name="Eur. J. Hum. Genet.">
        <title>Pathogenic variants in PIDD1 lead to an autosomal recessive neurodevelopmental disorder with pachygyria and psychiatric features.</title>
        <authorList>
            <person name="Zaki M.S."/>
            <person name="Accogli A."/>
            <person name="Mirzaa G."/>
            <person name="Rahman F."/>
            <person name="Mohammed H."/>
            <person name="Porras-Hurtado G.L."/>
            <person name="Efthymiou S."/>
            <person name="Maqbool S."/>
            <person name="Shukla A."/>
            <person name="Vincent J.B."/>
            <person name="Hussain A."/>
            <person name="Mir A."/>
            <person name="Beetz C."/>
            <person name="Leubauer A."/>
            <person name="Houlden H."/>
            <person name="Gleeson J.G."/>
            <person name="Maroofian R."/>
        </authorList>
    </citation>
    <scope>VARIANTS MRT75 447-TRP--ALA-910 DEL AND TRP-862</scope>
</reference>
<reference key="18">
    <citation type="journal article" date="2021" name="Transl. Psychiatry">
        <title>Biallelic mutations in the death domain of PIDD1 impair caspase-2 activation and are associated with intellectual disability.</title>
        <authorList>
            <person name="Sheikh T.I."/>
            <person name="Vasli N."/>
            <person name="Pastore S."/>
            <person name="Kharizi K."/>
            <person name="Harripaul R."/>
            <person name="Fattahi Z."/>
            <person name="Pande S."/>
            <person name="Naeem F."/>
            <person name="Hussain A."/>
            <person name="Mir A."/>
            <person name="Islam O."/>
            <person name="Girisha K.M."/>
            <person name="Irfan M."/>
            <person name="Ayub M."/>
            <person name="Schwarzer C."/>
            <person name="Najmabadi H."/>
            <person name="Shukla A."/>
            <person name="Sladky V.C."/>
            <person name="Braun V.Z."/>
            <person name="Garcia-Carpio I."/>
            <person name="Villunger A."/>
            <person name="Vincent J.B."/>
        </authorList>
    </citation>
    <scope>VARIANT MRT75 637-ARG--ALA-910 DEL</scope>
    <scope>CHARACTERIZATION OF VARIANTS MRT75 863-GLN--ALA-910 DEL AND 815-TRP</scope>
    <scope>INTERACTION WITH CRADD</scope>
</reference>
<protein>
    <recommendedName>
        <fullName evidence="32">p53-induced death domain-containing protein 1</fullName>
        <ecNumber evidence="12">3.4.21.-</ecNumber>
    </recommendedName>
    <alternativeName>
        <fullName>Leucine-rich repeat and death domain-containing protein</fullName>
    </alternativeName>
    <component>
        <recommendedName>
            <fullName evidence="27">PIDD-N</fullName>
        </recommendedName>
    </component>
    <component>
        <recommendedName>
            <fullName evidence="27">PIDD-C</fullName>
        </recommendedName>
    </component>
    <component>
        <recommendedName>
            <fullName evidence="27">PIDD-CC</fullName>
        </recommendedName>
    </component>
</protein>
<gene>
    <name evidence="29 33" type="primary">PIDD1</name>
    <name evidence="23" type="synonym">LRDD</name>
    <name evidence="24" type="synonym">PIDD</name>
</gene>
<name>PIDD1_HUMAN</name>
<dbReference type="EC" id="3.4.21.-" evidence="12"/>
<dbReference type="EMBL" id="AF229178">
    <property type="protein sequence ID" value="AAF69491.1"/>
    <property type="molecule type" value="mRNA"/>
</dbReference>
<dbReference type="EMBL" id="AF274972">
    <property type="protein sequence ID" value="AAG13461.1"/>
    <property type="molecule type" value="mRNA"/>
</dbReference>
<dbReference type="EMBL" id="AF465246">
    <property type="protein sequence ID" value="AAP97716.1"/>
    <property type="molecule type" value="mRNA"/>
</dbReference>
<dbReference type="EMBL" id="AK074893">
    <property type="protein sequence ID" value="BAC11272.1"/>
    <property type="molecule type" value="mRNA"/>
</dbReference>
<dbReference type="EMBL" id="AB208832">
    <property type="protein sequence ID" value="BAD92069.1"/>
    <property type="status" value="ALT_INIT"/>
    <property type="molecule type" value="mRNA"/>
</dbReference>
<dbReference type="EMBL" id="AB208949">
    <property type="protein sequence ID" value="BAD92186.1"/>
    <property type="status" value="ALT_INIT"/>
    <property type="molecule type" value="mRNA"/>
</dbReference>
<dbReference type="EMBL" id="AB209529">
    <property type="protein sequence ID" value="BAD92766.1"/>
    <property type="status" value="ALT_INIT"/>
    <property type="molecule type" value="mRNA"/>
</dbReference>
<dbReference type="EMBL" id="AL833849">
    <property type="protein sequence ID" value="CAD38708.1"/>
    <property type="status" value="ALT_INIT"/>
    <property type="molecule type" value="mRNA"/>
</dbReference>
<dbReference type="EMBL" id="BC014904">
    <property type="protein sequence ID" value="AAH14904.1"/>
    <property type="molecule type" value="mRNA"/>
</dbReference>
<dbReference type="CCDS" id="CCDS44508.1">
    <molecule id="Q9HB75-2"/>
</dbReference>
<dbReference type="CCDS" id="CCDS7716.1">
    <molecule id="Q9HB75-1"/>
</dbReference>
<dbReference type="RefSeq" id="NP_665893.2">
    <molecule id="Q9HB75-1"/>
    <property type="nucleotide sequence ID" value="NM_145886.4"/>
</dbReference>
<dbReference type="RefSeq" id="NP_665894.2">
    <molecule id="Q9HB75-2"/>
    <property type="nucleotide sequence ID" value="NM_145887.4"/>
</dbReference>
<dbReference type="RefSeq" id="XP_011518512.1">
    <molecule id="Q9HB75-1"/>
    <property type="nucleotide sequence ID" value="XM_011520210.4"/>
</dbReference>
<dbReference type="RefSeq" id="XP_011518513.1">
    <property type="nucleotide sequence ID" value="XM_011520211.2"/>
</dbReference>
<dbReference type="RefSeq" id="XP_016873482.1">
    <property type="nucleotide sequence ID" value="XM_017017993.1"/>
</dbReference>
<dbReference type="RefSeq" id="XP_047283202.1">
    <molecule id="Q9HB75-4"/>
    <property type="nucleotide sequence ID" value="XM_047427246.1"/>
</dbReference>
<dbReference type="PDB" id="2OF5">
    <property type="method" value="X-ray"/>
    <property type="resolution" value="3.20 A"/>
    <property type="chains" value="H/I/J/K/L=778-883"/>
</dbReference>
<dbReference type="PDBsum" id="2OF5"/>
<dbReference type="SMR" id="Q9HB75"/>
<dbReference type="BioGRID" id="120645">
    <property type="interactions" value="46"/>
</dbReference>
<dbReference type="ComplexPortal" id="CPX-3905">
    <property type="entry name" value="Caspase-2 PIDDosome"/>
</dbReference>
<dbReference type="CORUM" id="Q9HB75"/>
<dbReference type="FunCoup" id="Q9HB75">
    <property type="interactions" value="1335"/>
</dbReference>
<dbReference type="IntAct" id="Q9HB75">
    <property type="interactions" value="18"/>
</dbReference>
<dbReference type="MINT" id="Q9HB75"/>
<dbReference type="STRING" id="9606.ENSP00000337797"/>
<dbReference type="MEROPS" id="S68.001"/>
<dbReference type="MEROPS" id="S68.002"/>
<dbReference type="GlyGen" id="Q9HB75">
    <property type="glycosylation" value="1 site, 1 O-linked glycan (1 site)"/>
</dbReference>
<dbReference type="iPTMnet" id="Q9HB75"/>
<dbReference type="PhosphoSitePlus" id="Q9HB75"/>
<dbReference type="BioMuta" id="PIDD1"/>
<dbReference type="DMDM" id="116242715"/>
<dbReference type="jPOST" id="Q9HB75"/>
<dbReference type="MassIVE" id="Q9HB75"/>
<dbReference type="PaxDb" id="9606-ENSP00000337797"/>
<dbReference type="PeptideAtlas" id="Q9HB75"/>
<dbReference type="ProteomicsDB" id="81501">
    <molecule id="Q9HB75-1"/>
</dbReference>
<dbReference type="ProteomicsDB" id="81502">
    <molecule id="Q9HB75-2"/>
</dbReference>
<dbReference type="ProteomicsDB" id="81503">
    <molecule id="Q9HB75-3"/>
</dbReference>
<dbReference type="ProteomicsDB" id="81504">
    <molecule id="Q9HB75-4"/>
</dbReference>
<dbReference type="ProteomicsDB" id="81505">
    <molecule id="Q9HB75-5"/>
</dbReference>
<dbReference type="ProteomicsDB" id="81507">
    <molecule id="Q9HB75-7"/>
</dbReference>
<dbReference type="Antibodypedia" id="22664">
    <property type="antibodies" value="161 antibodies from 25 providers"/>
</dbReference>
<dbReference type="DNASU" id="55367"/>
<dbReference type="Ensembl" id="ENST00000347755.10">
    <molecule id="Q9HB75-1"/>
    <property type="protein sequence ID" value="ENSP00000337797.5"/>
    <property type="gene ID" value="ENSG00000177595.19"/>
</dbReference>
<dbReference type="Ensembl" id="ENST00000411829.6">
    <molecule id="Q9HB75-2"/>
    <property type="protein sequence ID" value="ENSP00000416801.2"/>
    <property type="gene ID" value="ENSG00000177595.19"/>
</dbReference>
<dbReference type="GeneID" id="55367"/>
<dbReference type="KEGG" id="hsa:55367"/>
<dbReference type="MANE-Select" id="ENST00000347755.10">
    <property type="protein sequence ID" value="ENSP00000337797.5"/>
    <property type="RefSeq nucleotide sequence ID" value="NM_145886.4"/>
    <property type="RefSeq protein sequence ID" value="NP_665893.2"/>
</dbReference>
<dbReference type="UCSC" id="uc001lro.3">
    <molecule id="Q9HB75-1"/>
    <property type="organism name" value="human"/>
</dbReference>
<dbReference type="AGR" id="HGNC:16491"/>
<dbReference type="CTD" id="55367"/>
<dbReference type="DisGeNET" id="55367"/>
<dbReference type="GeneCards" id="PIDD1"/>
<dbReference type="HGNC" id="HGNC:16491">
    <property type="gene designation" value="PIDD1"/>
</dbReference>
<dbReference type="HPA" id="ENSG00000177595">
    <property type="expression patterns" value="Low tissue specificity"/>
</dbReference>
<dbReference type="MalaCards" id="PIDD1"/>
<dbReference type="MIM" id="605247">
    <property type="type" value="gene"/>
</dbReference>
<dbReference type="MIM" id="619827">
    <property type="type" value="phenotype"/>
</dbReference>
<dbReference type="neXtProt" id="NX_Q9HB75"/>
<dbReference type="OpenTargets" id="ENSG00000177595"/>
<dbReference type="PharmGKB" id="PA30445"/>
<dbReference type="VEuPathDB" id="HostDB:ENSG00000177595"/>
<dbReference type="eggNOG" id="KOG0619">
    <property type="taxonomic scope" value="Eukaryota"/>
</dbReference>
<dbReference type="eggNOG" id="KOG4177">
    <property type="taxonomic scope" value="Eukaryota"/>
</dbReference>
<dbReference type="GeneTree" id="ENSGT00940000161780"/>
<dbReference type="HOGENOM" id="CLU_017883_0_0_1"/>
<dbReference type="InParanoid" id="Q9HB75"/>
<dbReference type="OMA" id="YPGGCHR"/>
<dbReference type="OrthoDB" id="676979at2759"/>
<dbReference type="PAN-GO" id="Q9HB75">
    <property type="GO annotations" value="4 GO annotations based on evolutionary models"/>
</dbReference>
<dbReference type="PhylomeDB" id="Q9HB75"/>
<dbReference type="TreeFam" id="TF331183"/>
<dbReference type="BioCyc" id="MetaCyc:ENSG00000177595-MONOMER"/>
<dbReference type="PathwayCommons" id="Q9HB75"/>
<dbReference type="Reactome" id="R-HSA-6803207">
    <property type="pathway name" value="TP53 Regulates Transcription of Caspase Activators and Caspases"/>
</dbReference>
<dbReference type="SignaLink" id="Q9HB75"/>
<dbReference type="SIGNOR" id="Q9HB75"/>
<dbReference type="BioGRID-ORCS" id="55367">
    <property type="hits" value="13 hits in 1154 CRISPR screens"/>
</dbReference>
<dbReference type="ChiTaRS" id="PIDD1">
    <property type="organism name" value="human"/>
</dbReference>
<dbReference type="EvolutionaryTrace" id="Q9HB75"/>
<dbReference type="GeneWiki" id="LRDD"/>
<dbReference type="GenomeRNAi" id="55367"/>
<dbReference type="Pharos" id="Q9HB75">
    <property type="development level" value="Tbio"/>
</dbReference>
<dbReference type="PRO" id="PR:Q9HB75"/>
<dbReference type="Proteomes" id="UP000005640">
    <property type="component" value="Chromosome 11"/>
</dbReference>
<dbReference type="RNAct" id="Q9HB75">
    <property type="molecule type" value="protein"/>
</dbReference>
<dbReference type="Bgee" id="ENSG00000177595">
    <property type="expression patterns" value="Expressed in apex of heart and 118 other cell types or tissues"/>
</dbReference>
<dbReference type="ExpressionAtlas" id="Q9HB75">
    <property type="expression patterns" value="baseline and differential"/>
</dbReference>
<dbReference type="GO" id="GO:0005737">
    <property type="term" value="C:cytoplasm"/>
    <property type="evidence" value="ECO:0000314"/>
    <property type="project" value="UniProtKB"/>
</dbReference>
<dbReference type="GO" id="GO:0005829">
    <property type="term" value="C:cytosol"/>
    <property type="evidence" value="ECO:0000314"/>
    <property type="project" value="HPA"/>
</dbReference>
<dbReference type="GO" id="GO:1905369">
    <property type="term" value="C:endopeptidase complex"/>
    <property type="evidence" value="ECO:0000353"/>
    <property type="project" value="ComplexPortal"/>
</dbReference>
<dbReference type="GO" id="GO:0005794">
    <property type="term" value="C:Golgi apparatus"/>
    <property type="evidence" value="ECO:0000314"/>
    <property type="project" value="HPA"/>
</dbReference>
<dbReference type="GO" id="GO:0005730">
    <property type="term" value="C:nucleolus"/>
    <property type="evidence" value="ECO:0000303"/>
    <property type="project" value="ComplexPortal"/>
</dbReference>
<dbReference type="GO" id="GO:0005654">
    <property type="term" value="C:nucleoplasm"/>
    <property type="evidence" value="ECO:0000304"/>
    <property type="project" value="Reactome"/>
</dbReference>
<dbReference type="GO" id="GO:0005634">
    <property type="term" value="C:nucleus"/>
    <property type="evidence" value="ECO:0000314"/>
    <property type="project" value="UniProtKB"/>
</dbReference>
<dbReference type="GO" id="GO:0005123">
    <property type="term" value="F:death receptor binding"/>
    <property type="evidence" value="ECO:0000304"/>
    <property type="project" value="ProtInc"/>
</dbReference>
<dbReference type="GO" id="GO:0004175">
    <property type="term" value="F:endopeptidase activity"/>
    <property type="evidence" value="ECO:0000314"/>
    <property type="project" value="UniProtKB"/>
</dbReference>
<dbReference type="GO" id="GO:0006915">
    <property type="term" value="P:apoptotic process"/>
    <property type="evidence" value="ECO:0000315"/>
    <property type="project" value="UniProtKB"/>
</dbReference>
<dbReference type="GO" id="GO:0006974">
    <property type="term" value="P:DNA damage response"/>
    <property type="evidence" value="ECO:0000314"/>
    <property type="project" value="UniProtKB"/>
</dbReference>
<dbReference type="GO" id="GO:0030330">
    <property type="term" value="P:DNA damage response, signal transduction by p53 class mediator"/>
    <property type="evidence" value="ECO:0000315"/>
    <property type="project" value="UniProtKB"/>
</dbReference>
<dbReference type="GO" id="GO:0008625">
    <property type="term" value="P:extrinsic apoptotic signaling pathway via death domain receptors"/>
    <property type="evidence" value="ECO:0007669"/>
    <property type="project" value="Ensembl"/>
</dbReference>
<dbReference type="GO" id="GO:0035556">
    <property type="term" value="P:intracellular signal transduction"/>
    <property type="evidence" value="ECO:0000318"/>
    <property type="project" value="GO_Central"/>
</dbReference>
<dbReference type="GO" id="GO:0043066">
    <property type="term" value="P:negative regulation of apoptotic process"/>
    <property type="evidence" value="ECO:0000315"/>
    <property type="project" value="UniProtKB"/>
</dbReference>
<dbReference type="GO" id="GO:0043065">
    <property type="term" value="P:positive regulation of apoptotic process"/>
    <property type="evidence" value="ECO:0000304"/>
    <property type="project" value="UniProtKB"/>
</dbReference>
<dbReference type="GO" id="GO:0016540">
    <property type="term" value="P:protein autoprocessing"/>
    <property type="evidence" value="ECO:0000314"/>
    <property type="project" value="UniProtKB"/>
</dbReference>
<dbReference type="GO" id="GO:0043122">
    <property type="term" value="P:regulation of canonical NF-kappaB signal transduction"/>
    <property type="evidence" value="ECO:0000315"/>
    <property type="project" value="UniProtKB"/>
</dbReference>
<dbReference type="GO" id="GO:0007165">
    <property type="term" value="P:signal transduction"/>
    <property type="evidence" value="ECO:0000304"/>
    <property type="project" value="ProtInc"/>
</dbReference>
<dbReference type="CDD" id="cd08779">
    <property type="entry name" value="Death_PIDD"/>
    <property type="match status" value="1"/>
</dbReference>
<dbReference type="FunFam" id="2.60.220.30:FF:000011">
    <property type="entry name" value="P53-induced death domain protein 1"/>
    <property type="match status" value="1"/>
</dbReference>
<dbReference type="FunFam" id="3.80.10.10:FF:000817">
    <property type="entry name" value="P53-induced death domain protein 1"/>
    <property type="match status" value="1"/>
</dbReference>
<dbReference type="FunFam" id="1.10.533.10:FF:000033">
    <property type="entry name" value="p53-induced death domain-containing protein 1 isoform X1"/>
    <property type="match status" value="1"/>
</dbReference>
<dbReference type="FunFam" id="2.60.220.30:FF:000010">
    <property type="entry name" value="p53-induced death domain-containing protein 1 isoform X2"/>
    <property type="match status" value="1"/>
</dbReference>
<dbReference type="Gene3D" id="2.60.220.30">
    <property type="match status" value="2"/>
</dbReference>
<dbReference type="Gene3D" id="1.10.533.10">
    <property type="entry name" value="Death Domain, Fas"/>
    <property type="match status" value="1"/>
</dbReference>
<dbReference type="Gene3D" id="3.80.10.10">
    <property type="entry name" value="Ribonuclease Inhibitor"/>
    <property type="match status" value="2"/>
</dbReference>
<dbReference type="InterPro" id="IPR011029">
    <property type="entry name" value="DEATH-like_dom_sf"/>
</dbReference>
<dbReference type="InterPro" id="IPR000488">
    <property type="entry name" value="Death_dom"/>
</dbReference>
<dbReference type="InterPro" id="IPR001611">
    <property type="entry name" value="Leu-rich_rpt"/>
</dbReference>
<dbReference type="InterPro" id="IPR003591">
    <property type="entry name" value="Leu-rich_rpt_typical-subtyp"/>
</dbReference>
<dbReference type="InterPro" id="IPR032675">
    <property type="entry name" value="LRR_dom_sf"/>
</dbReference>
<dbReference type="InterPro" id="IPR050216">
    <property type="entry name" value="LRR_domain-containing"/>
</dbReference>
<dbReference type="InterPro" id="IPR019502">
    <property type="entry name" value="Peptidase_S68_pidd"/>
</dbReference>
<dbReference type="InterPro" id="IPR000906">
    <property type="entry name" value="ZU5_dom"/>
</dbReference>
<dbReference type="PANTHER" id="PTHR48051">
    <property type="match status" value="1"/>
</dbReference>
<dbReference type="PANTHER" id="PTHR48051:SF39">
    <property type="entry name" value="P53-INDUCED DEATH DOMAIN PROTEIN 1"/>
    <property type="match status" value="1"/>
</dbReference>
<dbReference type="Pfam" id="PF00531">
    <property type="entry name" value="Death"/>
    <property type="match status" value="1"/>
</dbReference>
<dbReference type="Pfam" id="PF13855">
    <property type="entry name" value="LRR_8"/>
    <property type="match status" value="2"/>
</dbReference>
<dbReference type="Pfam" id="PF10461">
    <property type="entry name" value="Peptidase_S68"/>
    <property type="match status" value="1"/>
</dbReference>
<dbReference type="Pfam" id="PF00791">
    <property type="entry name" value="ZU5"/>
    <property type="match status" value="2"/>
</dbReference>
<dbReference type="SMART" id="SM00005">
    <property type="entry name" value="DEATH"/>
    <property type="match status" value="1"/>
</dbReference>
<dbReference type="SMART" id="SM00364">
    <property type="entry name" value="LRR_BAC"/>
    <property type="match status" value="5"/>
</dbReference>
<dbReference type="SMART" id="SM00369">
    <property type="entry name" value="LRR_TYP"/>
    <property type="match status" value="7"/>
</dbReference>
<dbReference type="SUPFAM" id="SSF47986">
    <property type="entry name" value="DEATH domain"/>
    <property type="match status" value="1"/>
</dbReference>
<dbReference type="SUPFAM" id="SSF52058">
    <property type="entry name" value="L domain-like"/>
    <property type="match status" value="1"/>
</dbReference>
<dbReference type="PROSITE" id="PS50017">
    <property type="entry name" value="DEATH_DOMAIN"/>
    <property type="match status" value="1"/>
</dbReference>
<dbReference type="PROSITE" id="PS51450">
    <property type="entry name" value="LRR"/>
    <property type="match status" value="7"/>
</dbReference>
<dbReference type="PROSITE" id="PS51145">
    <property type="entry name" value="ZU5"/>
    <property type="match status" value="2"/>
</dbReference>